<name>SYR_ALKOO</name>
<sequence length="587" mass="66303">MELLIKQISAFVEDVFEQKGYDKKYGMVTVSDRPDLCQFQCNGALPAAKEYKKAPIQIANDLLPALKNVEIFEEITIAGPGFININVKDSFLAAYVNEMYGSEKLGLEEPAEPQTIIIDYGGANVAKPLHVGHLRAAIIGESLKRISRFVGHKVIGDVHLGDWGLQMGMVISELRRRSPHLPYFDESYEGEYPAEAPFTIDELEDIYPAASKLAKSDAAAMEEAQQATAELQKGRRGYMALWQHILNVSVADLKKGYGNLNVDFDLWNGESDCQKYIDVMVDYLKKNNYTSFSDGLLIVDVAKETDNHVIPPFIVLKTDGSSLYSTTDLATIWERVQDYDPDQIIYVVDKRQELHFEQVFRCAKKTKIAGEDLTLKFLGFGTMNGKDGKPFKTREGGVMRLQDLIQIIKDAVYNKLQENEAIDPSEVDEISRKVGLAALKYGDLSNQITKDYVFDIDRFASFEGNTGPYILYTIVRIKSILRRIAAEGFQASDKIGVPHSDVERSLLLKLSRFNETVEFSFVNHSPNRICDYIYDLANTFNKFYHDTKIISETEFEKKSSWINLITLTMNVLETCLELLGIEAPEKM</sequence>
<evidence type="ECO:0000255" key="1">
    <source>
        <dbReference type="HAMAP-Rule" id="MF_00123"/>
    </source>
</evidence>
<protein>
    <recommendedName>
        <fullName evidence="1">Arginine--tRNA ligase</fullName>
        <ecNumber evidence="1">6.1.1.19</ecNumber>
    </recommendedName>
    <alternativeName>
        <fullName evidence="1">Arginyl-tRNA synthetase</fullName>
        <shortName evidence="1">ArgRS</shortName>
    </alternativeName>
</protein>
<proteinExistence type="inferred from homology"/>
<comment type="catalytic activity">
    <reaction evidence="1">
        <text>tRNA(Arg) + L-arginine + ATP = L-arginyl-tRNA(Arg) + AMP + diphosphate</text>
        <dbReference type="Rhea" id="RHEA:20301"/>
        <dbReference type="Rhea" id="RHEA-COMP:9658"/>
        <dbReference type="Rhea" id="RHEA-COMP:9673"/>
        <dbReference type="ChEBI" id="CHEBI:30616"/>
        <dbReference type="ChEBI" id="CHEBI:32682"/>
        <dbReference type="ChEBI" id="CHEBI:33019"/>
        <dbReference type="ChEBI" id="CHEBI:78442"/>
        <dbReference type="ChEBI" id="CHEBI:78513"/>
        <dbReference type="ChEBI" id="CHEBI:456215"/>
        <dbReference type="EC" id="6.1.1.19"/>
    </reaction>
</comment>
<comment type="subunit">
    <text evidence="1">Monomer.</text>
</comment>
<comment type="subcellular location">
    <subcellularLocation>
        <location evidence="1">Cytoplasm</location>
    </subcellularLocation>
</comment>
<comment type="similarity">
    <text evidence="1">Belongs to the class-I aminoacyl-tRNA synthetase family.</text>
</comment>
<organism>
    <name type="scientific">Alkaliphilus oremlandii (strain OhILAs)</name>
    <name type="common">Clostridium oremlandii (strain OhILAs)</name>
    <dbReference type="NCBI Taxonomy" id="350688"/>
    <lineage>
        <taxon>Bacteria</taxon>
        <taxon>Bacillati</taxon>
        <taxon>Bacillota</taxon>
        <taxon>Clostridia</taxon>
        <taxon>Peptostreptococcales</taxon>
        <taxon>Natronincolaceae</taxon>
        <taxon>Alkaliphilus</taxon>
    </lineage>
</organism>
<keyword id="KW-0030">Aminoacyl-tRNA synthetase</keyword>
<keyword id="KW-0067">ATP-binding</keyword>
<keyword id="KW-0963">Cytoplasm</keyword>
<keyword id="KW-0436">Ligase</keyword>
<keyword id="KW-0547">Nucleotide-binding</keyword>
<keyword id="KW-0648">Protein biosynthesis</keyword>
<keyword id="KW-1185">Reference proteome</keyword>
<reference key="1">
    <citation type="submission" date="2007-10" db="EMBL/GenBank/DDBJ databases">
        <title>Complete genome of Alkaliphilus oremlandii OhILAs.</title>
        <authorList>
            <person name="Copeland A."/>
            <person name="Lucas S."/>
            <person name="Lapidus A."/>
            <person name="Barry K."/>
            <person name="Detter J.C."/>
            <person name="Glavina del Rio T."/>
            <person name="Hammon N."/>
            <person name="Israni S."/>
            <person name="Dalin E."/>
            <person name="Tice H."/>
            <person name="Pitluck S."/>
            <person name="Chain P."/>
            <person name="Malfatti S."/>
            <person name="Shin M."/>
            <person name="Vergez L."/>
            <person name="Schmutz J."/>
            <person name="Larimer F."/>
            <person name="Land M."/>
            <person name="Hauser L."/>
            <person name="Kyrpides N."/>
            <person name="Mikhailova N."/>
            <person name="Stolz J.F."/>
            <person name="Dawson A."/>
            <person name="Fisher E."/>
            <person name="Crable B."/>
            <person name="Perera E."/>
            <person name="Lisak J."/>
            <person name="Ranganathan M."/>
            <person name="Basu P."/>
            <person name="Richardson P."/>
        </authorList>
    </citation>
    <scope>NUCLEOTIDE SEQUENCE [LARGE SCALE GENOMIC DNA]</scope>
    <source>
        <strain>OhILAs</strain>
    </source>
</reference>
<gene>
    <name evidence="1" type="primary">argS</name>
    <name type="ordered locus">Clos_2740</name>
</gene>
<accession>A8MKD9</accession>
<feature type="chain" id="PRO_1000198869" description="Arginine--tRNA ligase">
    <location>
        <begin position="1"/>
        <end position="587"/>
    </location>
</feature>
<feature type="short sequence motif" description="'HIGH' region">
    <location>
        <begin position="123"/>
        <end position="133"/>
    </location>
</feature>
<dbReference type="EC" id="6.1.1.19" evidence="1"/>
<dbReference type="EMBL" id="CP000853">
    <property type="protein sequence ID" value="ABW20271.1"/>
    <property type="molecule type" value="Genomic_DNA"/>
</dbReference>
<dbReference type="RefSeq" id="WP_012160578.1">
    <property type="nucleotide sequence ID" value="NC_009922.1"/>
</dbReference>
<dbReference type="SMR" id="A8MKD9"/>
<dbReference type="STRING" id="350688.Clos_2740"/>
<dbReference type="KEGG" id="aoe:Clos_2740"/>
<dbReference type="eggNOG" id="COG0018">
    <property type="taxonomic scope" value="Bacteria"/>
</dbReference>
<dbReference type="HOGENOM" id="CLU_006406_5_1_9"/>
<dbReference type="OrthoDB" id="9805987at2"/>
<dbReference type="Proteomes" id="UP000000269">
    <property type="component" value="Chromosome"/>
</dbReference>
<dbReference type="GO" id="GO:0005737">
    <property type="term" value="C:cytoplasm"/>
    <property type="evidence" value="ECO:0007669"/>
    <property type="project" value="UniProtKB-SubCell"/>
</dbReference>
<dbReference type="GO" id="GO:0004814">
    <property type="term" value="F:arginine-tRNA ligase activity"/>
    <property type="evidence" value="ECO:0007669"/>
    <property type="project" value="UniProtKB-UniRule"/>
</dbReference>
<dbReference type="GO" id="GO:0005524">
    <property type="term" value="F:ATP binding"/>
    <property type="evidence" value="ECO:0007669"/>
    <property type="project" value="UniProtKB-UniRule"/>
</dbReference>
<dbReference type="GO" id="GO:0006420">
    <property type="term" value="P:arginyl-tRNA aminoacylation"/>
    <property type="evidence" value="ECO:0007669"/>
    <property type="project" value="UniProtKB-UniRule"/>
</dbReference>
<dbReference type="Gene3D" id="3.30.1360.70">
    <property type="entry name" value="Arginyl tRNA synthetase N-terminal domain"/>
    <property type="match status" value="1"/>
</dbReference>
<dbReference type="Gene3D" id="3.40.50.620">
    <property type="entry name" value="HUPs"/>
    <property type="match status" value="1"/>
</dbReference>
<dbReference type="Gene3D" id="1.10.730.10">
    <property type="entry name" value="Isoleucyl-tRNA Synthetase, Domain 1"/>
    <property type="match status" value="1"/>
</dbReference>
<dbReference type="HAMAP" id="MF_00123">
    <property type="entry name" value="Arg_tRNA_synth"/>
    <property type="match status" value="1"/>
</dbReference>
<dbReference type="InterPro" id="IPR001278">
    <property type="entry name" value="Arg-tRNA-ligase"/>
</dbReference>
<dbReference type="InterPro" id="IPR005148">
    <property type="entry name" value="Arg-tRNA-synth_N"/>
</dbReference>
<dbReference type="InterPro" id="IPR036695">
    <property type="entry name" value="Arg-tRNA-synth_N_sf"/>
</dbReference>
<dbReference type="InterPro" id="IPR035684">
    <property type="entry name" value="ArgRS_core"/>
</dbReference>
<dbReference type="InterPro" id="IPR008909">
    <property type="entry name" value="DALR_anticod-bd"/>
</dbReference>
<dbReference type="InterPro" id="IPR014729">
    <property type="entry name" value="Rossmann-like_a/b/a_fold"/>
</dbReference>
<dbReference type="InterPro" id="IPR009080">
    <property type="entry name" value="tRNAsynth_Ia_anticodon-bd"/>
</dbReference>
<dbReference type="NCBIfam" id="TIGR00456">
    <property type="entry name" value="argS"/>
    <property type="match status" value="1"/>
</dbReference>
<dbReference type="PANTHER" id="PTHR11956:SF5">
    <property type="entry name" value="ARGININE--TRNA LIGASE, CYTOPLASMIC"/>
    <property type="match status" value="1"/>
</dbReference>
<dbReference type="PANTHER" id="PTHR11956">
    <property type="entry name" value="ARGINYL-TRNA SYNTHETASE"/>
    <property type="match status" value="1"/>
</dbReference>
<dbReference type="Pfam" id="PF03485">
    <property type="entry name" value="Arg_tRNA_synt_N"/>
    <property type="match status" value="1"/>
</dbReference>
<dbReference type="Pfam" id="PF05746">
    <property type="entry name" value="DALR_1"/>
    <property type="match status" value="1"/>
</dbReference>
<dbReference type="Pfam" id="PF00750">
    <property type="entry name" value="tRNA-synt_1d"/>
    <property type="match status" value="1"/>
</dbReference>
<dbReference type="PRINTS" id="PR01038">
    <property type="entry name" value="TRNASYNTHARG"/>
</dbReference>
<dbReference type="SMART" id="SM01016">
    <property type="entry name" value="Arg_tRNA_synt_N"/>
    <property type="match status" value="1"/>
</dbReference>
<dbReference type="SMART" id="SM00836">
    <property type="entry name" value="DALR_1"/>
    <property type="match status" value="1"/>
</dbReference>
<dbReference type="SUPFAM" id="SSF47323">
    <property type="entry name" value="Anticodon-binding domain of a subclass of class I aminoacyl-tRNA synthetases"/>
    <property type="match status" value="1"/>
</dbReference>
<dbReference type="SUPFAM" id="SSF55190">
    <property type="entry name" value="Arginyl-tRNA synthetase (ArgRS), N-terminal 'additional' domain"/>
    <property type="match status" value="1"/>
</dbReference>
<dbReference type="SUPFAM" id="SSF52374">
    <property type="entry name" value="Nucleotidylyl transferase"/>
    <property type="match status" value="1"/>
</dbReference>